<protein>
    <recommendedName>
        <fullName evidence="1">1-deoxy-D-xylulose 5-phosphate reductoisomerase</fullName>
        <shortName evidence="1">DXP reductoisomerase</shortName>
        <ecNumber evidence="1">1.1.1.267</ecNumber>
    </recommendedName>
    <alternativeName>
        <fullName evidence="1">1-deoxyxylulose-5-phosphate reductoisomerase</fullName>
    </alternativeName>
    <alternativeName>
        <fullName evidence="1">2-C-methyl-D-erythritol 4-phosphate synthase</fullName>
    </alternativeName>
</protein>
<proteinExistence type="inferred from homology"/>
<keyword id="KW-0414">Isoprene biosynthesis</keyword>
<keyword id="KW-0464">Manganese</keyword>
<keyword id="KW-0479">Metal-binding</keyword>
<keyword id="KW-0521">NADP</keyword>
<keyword id="KW-0560">Oxidoreductase</keyword>
<keyword id="KW-1185">Reference proteome</keyword>
<dbReference type="EC" id="1.1.1.267" evidence="1"/>
<dbReference type="EMBL" id="AM942759">
    <property type="protein sequence ID" value="CAR44512.1"/>
    <property type="molecule type" value="Genomic_DNA"/>
</dbReference>
<dbReference type="RefSeq" id="WP_012368304.1">
    <property type="nucleotide sequence ID" value="NC_010554.1"/>
</dbReference>
<dbReference type="SMR" id="B4F2C9"/>
<dbReference type="EnsemblBacteria" id="CAR44512">
    <property type="protein sequence ID" value="CAR44512"/>
    <property type="gene ID" value="PMI2281"/>
</dbReference>
<dbReference type="GeneID" id="6800094"/>
<dbReference type="KEGG" id="pmr:PMI2281"/>
<dbReference type="PATRIC" id="fig|529507.6.peg.2228"/>
<dbReference type="eggNOG" id="COG0743">
    <property type="taxonomic scope" value="Bacteria"/>
</dbReference>
<dbReference type="HOGENOM" id="CLU_035714_4_0_6"/>
<dbReference type="UniPathway" id="UPA00056">
    <property type="reaction ID" value="UER00092"/>
</dbReference>
<dbReference type="Proteomes" id="UP000008319">
    <property type="component" value="Chromosome"/>
</dbReference>
<dbReference type="GO" id="GO:0030604">
    <property type="term" value="F:1-deoxy-D-xylulose-5-phosphate reductoisomerase activity"/>
    <property type="evidence" value="ECO:0007669"/>
    <property type="project" value="UniProtKB-UniRule"/>
</dbReference>
<dbReference type="GO" id="GO:0030145">
    <property type="term" value="F:manganese ion binding"/>
    <property type="evidence" value="ECO:0007669"/>
    <property type="project" value="TreeGrafter"/>
</dbReference>
<dbReference type="GO" id="GO:0070402">
    <property type="term" value="F:NADPH binding"/>
    <property type="evidence" value="ECO:0007669"/>
    <property type="project" value="InterPro"/>
</dbReference>
<dbReference type="GO" id="GO:0051484">
    <property type="term" value="P:isopentenyl diphosphate biosynthetic process, methylerythritol 4-phosphate pathway involved in terpenoid biosynthetic process"/>
    <property type="evidence" value="ECO:0007669"/>
    <property type="project" value="TreeGrafter"/>
</dbReference>
<dbReference type="FunFam" id="1.10.1740.10:FF:000004">
    <property type="entry name" value="1-deoxy-D-xylulose 5-phosphate reductoisomerase"/>
    <property type="match status" value="1"/>
</dbReference>
<dbReference type="FunFam" id="3.40.50.720:FF:000045">
    <property type="entry name" value="1-deoxy-D-xylulose 5-phosphate reductoisomerase"/>
    <property type="match status" value="1"/>
</dbReference>
<dbReference type="Gene3D" id="1.10.1740.10">
    <property type="match status" value="1"/>
</dbReference>
<dbReference type="Gene3D" id="3.40.50.720">
    <property type="entry name" value="NAD(P)-binding Rossmann-like Domain"/>
    <property type="match status" value="1"/>
</dbReference>
<dbReference type="HAMAP" id="MF_00183">
    <property type="entry name" value="DXP_reductoisom"/>
    <property type="match status" value="1"/>
</dbReference>
<dbReference type="InterPro" id="IPR003821">
    <property type="entry name" value="DXP_reductoisomerase"/>
</dbReference>
<dbReference type="InterPro" id="IPR013644">
    <property type="entry name" value="DXP_reductoisomerase_C"/>
</dbReference>
<dbReference type="InterPro" id="IPR013512">
    <property type="entry name" value="DXP_reductoisomerase_N"/>
</dbReference>
<dbReference type="InterPro" id="IPR026877">
    <property type="entry name" value="DXPR_C"/>
</dbReference>
<dbReference type="InterPro" id="IPR036169">
    <property type="entry name" value="DXPR_C_sf"/>
</dbReference>
<dbReference type="InterPro" id="IPR036291">
    <property type="entry name" value="NAD(P)-bd_dom_sf"/>
</dbReference>
<dbReference type="NCBIfam" id="TIGR00243">
    <property type="entry name" value="Dxr"/>
    <property type="match status" value="1"/>
</dbReference>
<dbReference type="NCBIfam" id="NF003938">
    <property type="entry name" value="PRK05447.1-1"/>
    <property type="match status" value="1"/>
</dbReference>
<dbReference type="NCBIfam" id="NF009114">
    <property type="entry name" value="PRK12464.1"/>
    <property type="match status" value="1"/>
</dbReference>
<dbReference type="PANTHER" id="PTHR30525">
    <property type="entry name" value="1-DEOXY-D-XYLULOSE 5-PHOSPHATE REDUCTOISOMERASE"/>
    <property type="match status" value="1"/>
</dbReference>
<dbReference type="PANTHER" id="PTHR30525:SF0">
    <property type="entry name" value="1-DEOXY-D-XYLULOSE 5-PHOSPHATE REDUCTOISOMERASE, CHLOROPLASTIC"/>
    <property type="match status" value="1"/>
</dbReference>
<dbReference type="Pfam" id="PF08436">
    <property type="entry name" value="DXP_redisom_C"/>
    <property type="match status" value="1"/>
</dbReference>
<dbReference type="Pfam" id="PF02670">
    <property type="entry name" value="DXP_reductoisom"/>
    <property type="match status" value="1"/>
</dbReference>
<dbReference type="Pfam" id="PF13288">
    <property type="entry name" value="DXPR_C"/>
    <property type="match status" value="1"/>
</dbReference>
<dbReference type="PIRSF" id="PIRSF006205">
    <property type="entry name" value="Dxp_reductismrs"/>
    <property type="match status" value="1"/>
</dbReference>
<dbReference type="SUPFAM" id="SSF69055">
    <property type="entry name" value="1-deoxy-D-xylulose-5-phosphate reductoisomerase, C-terminal domain"/>
    <property type="match status" value="1"/>
</dbReference>
<dbReference type="SUPFAM" id="SSF55347">
    <property type="entry name" value="Glyceraldehyde-3-phosphate dehydrogenase-like, C-terminal domain"/>
    <property type="match status" value="1"/>
</dbReference>
<dbReference type="SUPFAM" id="SSF51735">
    <property type="entry name" value="NAD(P)-binding Rossmann-fold domains"/>
    <property type="match status" value="1"/>
</dbReference>
<comment type="function">
    <text evidence="1">Catalyzes the NADPH-dependent rearrangement and reduction of 1-deoxy-D-xylulose-5-phosphate (DXP) to 2-C-methyl-D-erythritol 4-phosphate (MEP).</text>
</comment>
<comment type="catalytic activity">
    <reaction evidence="1">
        <text>2-C-methyl-D-erythritol 4-phosphate + NADP(+) = 1-deoxy-D-xylulose 5-phosphate + NADPH + H(+)</text>
        <dbReference type="Rhea" id="RHEA:13717"/>
        <dbReference type="ChEBI" id="CHEBI:15378"/>
        <dbReference type="ChEBI" id="CHEBI:57783"/>
        <dbReference type="ChEBI" id="CHEBI:57792"/>
        <dbReference type="ChEBI" id="CHEBI:58262"/>
        <dbReference type="ChEBI" id="CHEBI:58349"/>
        <dbReference type="EC" id="1.1.1.267"/>
    </reaction>
    <physiologicalReaction direction="right-to-left" evidence="1">
        <dbReference type="Rhea" id="RHEA:13719"/>
    </physiologicalReaction>
</comment>
<comment type="cofactor">
    <cofactor evidence="1">
        <name>Mg(2+)</name>
        <dbReference type="ChEBI" id="CHEBI:18420"/>
    </cofactor>
    <cofactor evidence="1">
        <name>Mn(2+)</name>
        <dbReference type="ChEBI" id="CHEBI:29035"/>
    </cofactor>
</comment>
<comment type="pathway">
    <text evidence="1">Isoprenoid biosynthesis; isopentenyl diphosphate biosynthesis via DXP pathway; isopentenyl diphosphate from 1-deoxy-D-xylulose 5-phosphate: step 1/6.</text>
</comment>
<comment type="subunit">
    <text evidence="1">Homodimer.</text>
</comment>
<comment type="similarity">
    <text evidence="1">Belongs to the DXR family.</text>
</comment>
<feature type="chain" id="PRO_1000098510" description="1-deoxy-D-xylulose 5-phosphate reductoisomerase">
    <location>
        <begin position="1"/>
        <end position="397"/>
    </location>
</feature>
<feature type="binding site" evidence="1">
    <location>
        <position position="10"/>
    </location>
    <ligand>
        <name>NADPH</name>
        <dbReference type="ChEBI" id="CHEBI:57783"/>
    </ligand>
</feature>
<feature type="binding site" evidence="1">
    <location>
        <position position="11"/>
    </location>
    <ligand>
        <name>NADPH</name>
        <dbReference type="ChEBI" id="CHEBI:57783"/>
    </ligand>
</feature>
<feature type="binding site" evidence="1">
    <location>
        <position position="12"/>
    </location>
    <ligand>
        <name>NADPH</name>
        <dbReference type="ChEBI" id="CHEBI:57783"/>
    </ligand>
</feature>
<feature type="binding site" evidence="1">
    <location>
        <position position="13"/>
    </location>
    <ligand>
        <name>NADPH</name>
        <dbReference type="ChEBI" id="CHEBI:57783"/>
    </ligand>
</feature>
<feature type="binding site" evidence="1">
    <location>
        <position position="36"/>
    </location>
    <ligand>
        <name>NADPH</name>
        <dbReference type="ChEBI" id="CHEBI:57783"/>
    </ligand>
</feature>
<feature type="binding site" evidence="1">
    <location>
        <position position="37"/>
    </location>
    <ligand>
        <name>NADPH</name>
        <dbReference type="ChEBI" id="CHEBI:57783"/>
    </ligand>
</feature>
<feature type="binding site" evidence="1">
    <location>
        <position position="38"/>
    </location>
    <ligand>
        <name>NADPH</name>
        <dbReference type="ChEBI" id="CHEBI:57783"/>
    </ligand>
</feature>
<feature type="binding site" evidence="1">
    <location>
        <position position="124"/>
    </location>
    <ligand>
        <name>NADPH</name>
        <dbReference type="ChEBI" id="CHEBI:57783"/>
    </ligand>
</feature>
<feature type="binding site" evidence="1">
    <location>
        <position position="125"/>
    </location>
    <ligand>
        <name>1-deoxy-D-xylulose 5-phosphate</name>
        <dbReference type="ChEBI" id="CHEBI:57792"/>
    </ligand>
</feature>
<feature type="binding site" evidence="1">
    <location>
        <position position="126"/>
    </location>
    <ligand>
        <name>NADPH</name>
        <dbReference type="ChEBI" id="CHEBI:57783"/>
    </ligand>
</feature>
<feature type="binding site" evidence="1">
    <location>
        <position position="150"/>
    </location>
    <ligand>
        <name>Mn(2+)</name>
        <dbReference type="ChEBI" id="CHEBI:29035"/>
    </ligand>
</feature>
<feature type="binding site" evidence="1">
    <location>
        <position position="151"/>
    </location>
    <ligand>
        <name>1-deoxy-D-xylulose 5-phosphate</name>
        <dbReference type="ChEBI" id="CHEBI:57792"/>
    </ligand>
</feature>
<feature type="binding site" evidence="1">
    <location>
        <position position="152"/>
    </location>
    <ligand>
        <name>1-deoxy-D-xylulose 5-phosphate</name>
        <dbReference type="ChEBI" id="CHEBI:57792"/>
    </ligand>
</feature>
<feature type="binding site" evidence="1">
    <location>
        <position position="152"/>
    </location>
    <ligand>
        <name>Mn(2+)</name>
        <dbReference type="ChEBI" id="CHEBI:29035"/>
    </ligand>
</feature>
<feature type="binding site" evidence="1">
    <location>
        <position position="186"/>
    </location>
    <ligand>
        <name>1-deoxy-D-xylulose 5-phosphate</name>
        <dbReference type="ChEBI" id="CHEBI:57792"/>
    </ligand>
</feature>
<feature type="binding site" evidence="1">
    <location>
        <position position="209"/>
    </location>
    <ligand>
        <name>1-deoxy-D-xylulose 5-phosphate</name>
        <dbReference type="ChEBI" id="CHEBI:57792"/>
    </ligand>
</feature>
<feature type="binding site" evidence="1">
    <location>
        <position position="215"/>
    </location>
    <ligand>
        <name>NADPH</name>
        <dbReference type="ChEBI" id="CHEBI:57783"/>
    </ligand>
</feature>
<feature type="binding site" evidence="1">
    <location>
        <position position="222"/>
    </location>
    <ligand>
        <name>1-deoxy-D-xylulose 5-phosphate</name>
        <dbReference type="ChEBI" id="CHEBI:57792"/>
    </ligand>
</feature>
<feature type="binding site" evidence="1">
    <location>
        <position position="227"/>
    </location>
    <ligand>
        <name>1-deoxy-D-xylulose 5-phosphate</name>
        <dbReference type="ChEBI" id="CHEBI:57792"/>
    </ligand>
</feature>
<feature type="binding site" evidence="1">
    <location>
        <position position="228"/>
    </location>
    <ligand>
        <name>1-deoxy-D-xylulose 5-phosphate</name>
        <dbReference type="ChEBI" id="CHEBI:57792"/>
    </ligand>
</feature>
<feature type="binding site" evidence="1">
    <location>
        <position position="231"/>
    </location>
    <ligand>
        <name>1-deoxy-D-xylulose 5-phosphate</name>
        <dbReference type="ChEBI" id="CHEBI:57792"/>
    </ligand>
</feature>
<feature type="binding site" evidence="1">
    <location>
        <position position="231"/>
    </location>
    <ligand>
        <name>Mn(2+)</name>
        <dbReference type="ChEBI" id="CHEBI:29035"/>
    </ligand>
</feature>
<accession>B4F2C9</accession>
<organism>
    <name type="scientific">Proteus mirabilis (strain HI4320)</name>
    <dbReference type="NCBI Taxonomy" id="529507"/>
    <lineage>
        <taxon>Bacteria</taxon>
        <taxon>Pseudomonadati</taxon>
        <taxon>Pseudomonadota</taxon>
        <taxon>Gammaproteobacteria</taxon>
        <taxon>Enterobacterales</taxon>
        <taxon>Morganellaceae</taxon>
        <taxon>Proteus</taxon>
    </lineage>
</organism>
<evidence type="ECO:0000255" key="1">
    <source>
        <dbReference type="HAMAP-Rule" id="MF_00183"/>
    </source>
</evidence>
<gene>
    <name evidence="1" type="primary">dxr</name>
    <name type="ordered locus">PMI2281</name>
</gene>
<reference key="1">
    <citation type="journal article" date="2008" name="J. Bacteriol.">
        <title>Complete genome sequence of uropathogenic Proteus mirabilis, a master of both adherence and motility.</title>
        <authorList>
            <person name="Pearson M.M."/>
            <person name="Sebaihia M."/>
            <person name="Churcher C."/>
            <person name="Quail M.A."/>
            <person name="Seshasayee A.S."/>
            <person name="Luscombe N.M."/>
            <person name="Abdellah Z."/>
            <person name="Arrosmith C."/>
            <person name="Atkin B."/>
            <person name="Chillingworth T."/>
            <person name="Hauser H."/>
            <person name="Jagels K."/>
            <person name="Moule S."/>
            <person name="Mungall K."/>
            <person name="Norbertczak H."/>
            <person name="Rabbinowitsch E."/>
            <person name="Walker D."/>
            <person name="Whithead S."/>
            <person name="Thomson N.R."/>
            <person name="Rather P.N."/>
            <person name="Parkhill J."/>
            <person name="Mobley H.L.T."/>
        </authorList>
    </citation>
    <scope>NUCLEOTIDE SEQUENCE [LARGE SCALE GENOMIC DNA]</scope>
    <source>
        <strain>HI4320</strain>
    </source>
</reference>
<name>DXR_PROMH</name>
<sequence>MKQITILGSTGSIGTSTLSVIENNPDEFQVLALVAGKNATKMAQQCRAFQPKYAVMSDEKSAGELKQLLANTSCKTEILSGSDAVNEIAALDEADQVMSAITGVAGLKPTLAAIEKGKRILLANKESLITSGRLFFDAVAKYGAKVLPIDSEHNAIYQSLPTGIQDNLGHASLEAHGITSILLTGSGGPFRYTPLDELDAMTPDQACAHPNWSMGRKISVDSATMMNKGLEYIEARYFFNASEAEMEVIIHPQSVIHSMVRYRDGSIIAQIGEPDMRTPIAYSMAYPHRTQSGAKALDFFEIQALEFIRPDYQRYPCLALAIEASQRGQASTTVLNAANEVVVDAFLNEKVKFTDIAKINRKVVEHFDLSEPQSIDDVLEIDKLARLQTQQIIAQIV</sequence>